<gene>
    <name type="primary">Ckm</name>
    <name type="synonym">Ckmm</name>
</gene>
<accession>P07310</accession>
<proteinExistence type="evidence at protein level"/>
<feature type="chain" id="PRO_0000211976" description="Creatine kinase M-type">
    <location>
        <begin position="1"/>
        <end position="381"/>
    </location>
</feature>
<feature type="domain" description="Phosphagen kinase N-terminal" evidence="4">
    <location>
        <begin position="11"/>
        <end position="98"/>
    </location>
</feature>
<feature type="domain" description="Phosphagen kinase C-terminal" evidence="5">
    <location>
        <begin position="125"/>
        <end position="367"/>
    </location>
</feature>
<feature type="binding site" evidence="5">
    <location>
        <begin position="128"/>
        <end position="132"/>
    </location>
    <ligand>
        <name>ATP</name>
        <dbReference type="ChEBI" id="CHEBI:30616"/>
    </ligand>
</feature>
<feature type="binding site" evidence="5">
    <location>
        <position position="191"/>
    </location>
    <ligand>
        <name>ATP</name>
        <dbReference type="ChEBI" id="CHEBI:30616"/>
    </ligand>
</feature>
<feature type="binding site" evidence="5">
    <location>
        <position position="236"/>
    </location>
    <ligand>
        <name>ATP</name>
        <dbReference type="ChEBI" id="CHEBI:30616"/>
    </ligand>
</feature>
<feature type="binding site" evidence="5">
    <location>
        <position position="292"/>
    </location>
    <ligand>
        <name>ATP</name>
        <dbReference type="ChEBI" id="CHEBI:30616"/>
    </ligand>
</feature>
<feature type="binding site" evidence="5">
    <location>
        <begin position="320"/>
        <end position="325"/>
    </location>
    <ligand>
        <name>ATP</name>
        <dbReference type="ChEBI" id="CHEBI:30616"/>
    </ligand>
</feature>
<feature type="binding site" evidence="5">
    <location>
        <position position="335"/>
    </location>
    <ligand>
        <name>ATP</name>
        <dbReference type="ChEBI" id="CHEBI:30616"/>
    </ligand>
</feature>
<feature type="modified residue" description="Phosphoserine" evidence="7">
    <location>
        <position position="164"/>
    </location>
</feature>
<feature type="modified residue" description="Phosphothreonine" evidence="2">
    <location>
        <position position="166"/>
    </location>
</feature>
<feature type="modified residue" description="Phosphoserine" evidence="2">
    <location>
        <position position="178"/>
    </location>
</feature>
<feature type="modified residue" description="Phosphothreonine" evidence="2">
    <location>
        <position position="180"/>
    </location>
</feature>
<feature type="modified residue" description="Phosphoserine" evidence="7">
    <location>
        <position position="199"/>
    </location>
</feature>
<feature type="modified residue" description="Phosphothreonine" evidence="2">
    <location>
        <position position="313"/>
    </location>
</feature>
<feature type="modified residue" description="Phosphothreonine" evidence="7">
    <location>
        <position position="322"/>
    </location>
</feature>
<feature type="modified residue" description="Phosphoserine" evidence="7">
    <location>
        <position position="372"/>
    </location>
</feature>
<comment type="function">
    <text evidence="1">Reversibly catalyzes the transfer of phosphate between ATP and various phosphogens (e.g. creatine phosphate). Creatine kinase isoenzymes play a central role in energy transduction in tissues with large, fluctuating energy demands, such as skeletal muscle, heart, brain and spermatozoa.</text>
</comment>
<comment type="catalytic activity">
    <reaction evidence="1 6">
        <text>creatine + ATP = N-phosphocreatine + ADP + H(+)</text>
        <dbReference type="Rhea" id="RHEA:17157"/>
        <dbReference type="ChEBI" id="CHEBI:15378"/>
        <dbReference type="ChEBI" id="CHEBI:30616"/>
        <dbReference type="ChEBI" id="CHEBI:57947"/>
        <dbReference type="ChEBI" id="CHEBI:58092"/>
        <dbReference type="ChEBI" id="CHEBI:456216"/>
        <dbReference type="EC" id="2.7.3.2"/>
    </reaction>
</comment>
<comment type="subunit">
    <text evidence="3">Dimer of identical or non-identical chains, which can be either B (brain type) or M (muscle type). With MM being the major form in skeletal muscle and myocardium, MB existing in myocardium, and BB existing in many tissues, especially brain.</text>
</comment>
<comment type="subcellular location">
    <subcellularLocation>
        <location>Cytoplasm</location>
    </subcellularLocation>
</comment>
<comment type="similarity">
    <text evidence="4 5">Belongs to the ATP:guanido phosphotransferase family.</text>
</comment>
<organism>
    <name type="scientific">Mus musculus</name>
    <name type="common">Mouse</name>
    <dbReference type="NCBI Taxonomy" id="10090"/>
    <lineage>
        <taxon>Eukaryota</taxon>
        <taxon>Metazoa</taxon>
        <taxon>Chordata</taxon>
        <taxon>Craniata</taxon>
        <taxon>Vertebrata</taxon>
        <taxon>Euteleostomi</taxon>
        <taxon>Mammalia</taxon>
        <taxon>Eutheria</taxon>
        <taxon>Euarchontoglires</taxon>
        <taxon>Glires</taxon>
        <taxon>Rodentia</taxon>
        <taxon>Myomorpha</taxon>
        <taxon>Muroidea</taxon>
        <taxon>Muridae</taxon>
        <taxon>Murinae</taxon>
        <taxon>Mus</taxon>
        <taxon>Mus</taxon>
    </lineage>
</organism>
<sequence length="381" mass="43045">MPFGNTHNKFKLNYKPQEEYPDLSKHNNHMAKVLTPDLYNKLRDKETPSGFTLDDVIQTGVDNPGHPFIMTVGCVAGDEESYTVFKDLFDPIIQDRHGGYKPTDKHKTDLNHENLKGGDDLDPNYVLSSRVRTGRSIKGYTLPPHCSRGERRAVEKLSVEALNSLTGEFKGKYYPLKSMTEQEQQQLIDDHFLFDKPVSPLLLASGMARDWPDARGIWHNDNKSFLVWVNEEDHLRVISMEKGGNMKEVFRRFCVGLQKIEEIFKKAGHPFMWNEHLGYVLTCPSNLGTGLRGGVHVKLANLSKHPKFEEILTRLRLQKRGTGGVDTAAVGAVFDISNADRLGSSEVEQVQLVVDGVKLMVEMEKKLEKGQSIDDMIPAQK</sequence>
<dbReference type="EC" id="2.7.3.2" evidence="1"/>
<dbReference type="EMBL" id="X03233">
    <property type="protein sequence ID" value="CAA26979.1"/>
    <property type="molecule type" value="mRNA"/>
</dbReference>
<dbReference type="CCDS" id="CCDS20902.1"/>
<dbReference type="PIR" id="A23590">
    <property type="entry name" value="A23590"/>
</dbReference>
<dbReference type="RefSeq" id="NP_031736.1">
    <property type="nucleotide sequence ID" value="NM_007710.2"/>
</dbReference>
<dbReference type="SMR" id="P07310"/>
<dbReference type="BioGRID" id="198726">
    <property type="interactions" value="12"/>
</dbReference>
<dbReference type="FunCoup" id="P07310">
    <property type="interactions" value="205"/>
</dbReference>
<dbReference type="IntAct" id="P07310">
    <property type="interactions" value="6"/>
</dbReference>
<dbReference type="MINT" id="P07310"/>
<dbReference type="STRING" id="10090.ENSMUSP00000146972"/>
<dbReference type="GlyGen" id="P07310">
    <property type="glycosylation" value="1 site, 1 O-linked glycan (1 site)"/>
</dbReference>
<dbReference type="iPTMnet" id="P07310"/>
<dbReference type="MetOSite" id="P07310"/>
<dbReference type="PhosphoSitePlus" id="P07310"/>
<dbReference type="SwissPalm" id="P07310"/>
<dbReference type="CPTAC" id="non-CPTAC-3798"/>
<dbReference type="jPOST" id="P07310"/>
<dbReference type="PaxDb" id="10090-ENSMUSP00000003643"/>
<dbReference type="ProteomicsDB" id="263510"/>
<dbReference type="Antibodypedia" id="17872">
    <property type="antibodies" value="923 antibodies from 39 providers"/>
</dbReference>
<dbReference type="DNASU" id="12715"/>
<dbReference type="Ensembl" id="ENSMUST00000208710.2">
    <property type="protein sequence ID" value="ENSMUSP00000146972.2"/>
    <property type="gene ID" value="ENSMUSG00000030399.3"/>
</dbReference>
<dbReference type="GeneID" id="12715"/>
<dbReference type="KEGG" id="mmu:12715"/>
<dbReference type="UCSC" id="uc009flu.1">
    <property type="organism name" value="mouse"/>
</dbReference>
<dbReference type="AGR" id="MGI:88413"/>
<dbReference type="CTD" id="1158"/>
<dbReference type="MGI" id="MGI:88413">
    <property type="gene designation" value="Ckm"/>
</dbReference>
<dbReference type="VEuPathDB" id="HostDB:ENSMUSG00000030399"/>
<dbReference type="eggNOG" id="KOG3581">
    <property type="taxonomic scope" value="Eukaryota"/>
</dbReference>
<dbReference type="GeneTree" id="ENSGT00950000182772"/>
<dbReference type="HOGENOM" id="CLU_019868_4_2_1"/>
<dbReference type="InParanoid" id="P07310"/>
<dbReference type="OMA" id="LFARCEV"/>
<dbReference type="OrthoDB" id="430219at2759"/>
<dbReference type="PhylomeDB" id="P07310"/>
<dbReference type="TreeFam" id="TF314214"/>
<dbReference type="BRENDA" id="2.7.3.2">
    <property type="organism ID" value="3474"/>
</dbReference>
<dbReference type="Reactome" id="R-MMU-71288">
    <property type="pathway name" value="Creatine metabolism"/>
</dbReference>
<dbReference type="BioGRID-ORCS" id="12715">
    <property type="hits" value="1 hit in 76 CRISPR screens"/>
</dbReference>
<dbReference type="ChiTaRS" id="Ckm">
    <property type="organism name" value="mouse"/>
</dbReference>
<dbReference type="PRO" id="PR:P07310"/>
<dbReference type="Proteomes" id="UP000000589">
    <property type="component" value="Chromosome 7"/>
</dbReference>
<dbReference type="RNAct" id="P07310">
    <property type="molecule type" value="protein"/>
</dbReference>
<dbReference type="Bgee" id="ENSMUSG00000030399">
    <property type="expression patterns" value="Expressed in digastric muscle group and 146 other cell types or tissues"/>
</dbReference>
<dbReference type="ExpressionAtlas" id="P07310">
    <property type="expression patterns" value="baseline and differential"/>
</dbReference>
<dbReference type="GO" id="GO:0005737">
    <property type="term" value="C:cytoplasm"/>
    <property type="evidence" value="ECO:0007669"/>
    <property type="project" value="UniProtKB-SubCell"/>
</dbReference>
<dbReference type="GO" id="GO:0005615">
    <property type="term" value="C:extracellular space"/>
    <property type="evidence" value="ECO:0000314"/>
    <property type="project" value="MGI"/>
</dbReference>
<dbReference type="GO" id="GO:0005524">
    <property type="term" value="F:ATP binding"/>
    <property type="evidence" value="ECO:0007669"/>
    <property type="project" value="UniProtKB-KW"/>
</dbReference>
<dbReference type="GO" id="GO:0004111">
    <property type="term" value="F:creatine kinase activity"/>
    <property type="evidence" value="ECO:0000314"/>
    <property type="project" value="MGI"/>
</dbReference>
<dbReference type="GO" id="GO:0046314">
    <property type="term" value="P:phosphocreatine biosynthetic process"/>
    <property type="evidence" value="ECO:0000314"/>
    <property type="project" value="MGI"/>
</dbReference>
<dbReference type="GO" id="GO:0006603">
    <property type="term" value="P:phosphocreatine metabolic process"/>
    <property type="evidence" value="ECO:0000304"/>
    <property type="project" value="MGI"/>
</dbReference>
<dbReference type="GO" id="GO:0009408">
    <property type="term" value="P:response to heat"/>
    <property type="evidence" value="ECO:0000250"/>
    <property type="project" value="AgBase"/>
</dbReference>
<dbReference type="CDD" id="cd00716">
    <property type="entry name" value="creatine_kinase_like"/>
    <property type="match status" value="1"/>
</dbReference>
<dbReference type="FunFam" id="3.30.590.10:FF:000026">
    <property type="entry name" value="Creatine kinase B-type"/>
    <property type="match status" value="1"/>
</dbReference>
<dbReference type="FunFam" id="1.10.135.10:FF:000001">
    <property type="entry name" value="Creatine kinase M-type"/>
    <property type="match status" value="1"/>
</dbReference>
<dbReference type="Gene3D" id="1.10.135.10">
    <property type="entry name" value="ATP:guanido phosphotransferase, N-terminal domain"/>
    <property type="match status" value="1"/>
</dbReference>
<dbReference type="Gene3D" id="3.30.590.10">
    <property type="entry name" value="Glutamine synthetase/guanido kinase, catalytic domain"/>
    <property type="match status" value="1"/>
</dbReference>
<dbReference type="InterPro" id="IPR000749">
    <property type="entry name" value="ATP-guanido_PTrfase"/>
</dbReference>
<dbReference type="InterPro" id="IPR022415">
    <property type="entry name" value="ATP-guanido_PTrfase_AS"/>
</dbReference>
<dbReference type="InterPro" id="IPR022414">
    <property type="entry name" value="ATP-guanido_PTrfase_cat"/>
</dbReference>
<dbReference type="InterPro" id="IPR022413">
    <property type="entry name" value="ATP-guanido_PTrfase_N"/>
</dbReference>
<dbReference type="InterPro" id="IPR036802">
    <property type="entry name" value="ATP-guanido_PTrfase_N_sf"/>
</dbReference>
<dbReference type="InterPro" id="IPR014746">
    <property type="entry name" value="Gln_synth/guanido_kin_cat_dom"/>
</dbReference>
<dbReference type="PANTHER" id="PTHR11547">
    <property type="entry name" value="ARGININE OR CREATINE KINASE"/>
    <property type="match status" value="1"/>
</dbReference>
<dbReference type="PANTHER" id="PTHR11547:SF63">
    <property type="entry name" value="CREATINE KINASE M-TYPE"/>
    <property type="match status" value="1"/>
</dbReference>
<dbReference type="Pfam" id="PF00217">
    <property type="entry name" value="ATP-gua_Ptrans"/>
    <property type="match status" value="1"/>
</dbReference>
<dbReference type="Pfam" id="PF02807">
    <property type="entry name" value="ATP-gua_PtransN"/>
    <property type="match status" value="1"/>
</dbReference>
<dbReference type="SUPFAM" id="SSF55931">
    <property type="entry name" value="Glutamine synthetase/guanido kinase"/>
    <property type="match status" value="1"/>
</dbReference>
<dbReference type="SUPFAM" id="SSF48034">
    <property type="entry name" value="Guanido kinase N-terminal domain"/>
    <property type="match status" value="1"/>
</dbReference>
<dbReference type="PROSITE" id="PS00112">
    <property type="entry name" value="PHOSPHAGEN_KINASE"/>
    <property type="match status" value="1"/>
</dbReference>
<dbReference type="PROSITE" id="PS51510">
    <property type="entry name" value="PHOSPHAGEN_KINASE_C"/>
    <property type="match status" value="1"/>
</dbReference>
<dbReference type="PROSITE" id="PS51509">
    <property type="entry name" value="PHOSPHAGEN_KINASE_N"/>
    <property type="match status" value="1"/>
</dbReference>
<protein>
    <recommendedName>
        <fullName>Creatine kinase M-type</fullName>
        <ecNumber evidence="1">2.7.3.2</ecNumber>
    </recommendedName>
    <alternativeName>
        <fullName>Creatine kinase M chain</fullName>
    </alternativeName>
    <alternativeName>
        <fullName>Creatine phosphokinase M-type</fullName>
        <shortName>CPK-M</shortName>
    </alternativeName>
    <alternativeName>
        <fullName>M-CK</fullName>
    </alternativeName>
</protein>
<name>KCRM_MOUSE</name>
<reference key="1">
    <citation type="journal article" date="1985" name="J. Mol. Evol.">
        <title>The mouse muscle creatine kinase cDNA and deduced amino acid sequences: comparison to evolutionarily related enzymes.</title>
        <authorList>
            <person name="Buskin J.N."/>
            <person name="Jaynes J.B."/>
            <person name="Chamberlain J.S."/>
            <person name="Hauschka S.D."/>
        </authorList>
    </citation>
    <scope>NUCLEOTIDE SEQUENCE [MRNA]</scope>
</reference>
<reference key="2">
    <citation type="journal article" date="2010" name="Cell">
        <title>A tissue-specific atlas of mouse protein phosphorylation and expression.</title>
        <authorList>
            <person name="Huttlin E.L."/>
            <person name="Jedrychowski M.P."/>
            <person name="Elias J.E."/>
            <person name="Goswami T."/>
            <person name="Rad R."/>
            <person name="Beausoleil S.A."/>
            <person name="Villen J."/>
            <person name="Haas W."/>
            <person name="Sowa M.E."/>
            <person name="Gygi S.P."/>
        </authorList>
    </citation>
    <scope>PHOSPHORYLATION [LARGE SCALE ANALYSIS] AT SER-164; SER-199; THR-322 AND SER-372</scope>
    <scope>IDENTIFICATION BY MASS SPECTROMETRY [LARGE SCALE ANALYSIS]</scope>
    <source>
        <tissue>Brown adipose tissue</tissue>
        <tissue>Heart</tissue>
        <tissue>Kidney</tissue>
        <tissue>Lung</tissue>
    </source>
</reference>
<evidence type="ECO:0000250" key="1">
    <source>
        <dbReference type="UniProtKB" id="P00563"/>
    </source>
</evidence>
<evidence type="ECO:0000250" key="2">
    <source>
        <dbReference type="UniProtKB" id="P00564"/>
    </source>
</evidence>
<evidence type="ECO:0000250" key="3">
    <source>
        <dbReference type="UniProtKB" id="P12277"/>
    </source>
</evidence>
<evidence type="ECO:0000255" key="4">
    <source>
        <dbReference type="PROSITE-ProRule" id="PRU00842"/>
    </source>
</evidence>
<evidence type="ECO:0000255" key="5">
    <source>
        <dbReference type="PROSITE-ProRule" id="PRU00843"/>
    </source>
</evidence>
<evidence type="ECO:0000255" key="6">
    <source>
        <dbReference type="PROSITE-ProRule" id="PRU10029"/>
    </source>
</evidence>
<evidence type="ECO:0007744" key="7">
    <source>
    </source>
</evidence>
<keyword id="KW-0067">ATP-binding</keyword>
<keyword id="KW-0963">Cytoplasm</keyword>
<keyword id="KW-0418">Kinase</keyword>
<keyword id="KW-0547">Nucleotide-binding</keyword>
<keyword id="KW-0597">Phosphoprotein</keyword>
<keyword id="KW-1185">Reference proteome</keyword>
<keyword id="KW-0808">Transferase</keyword>